<gene>
    <name evidence="1" type="primary">hutI</name>
    <name type="ordered locus">SPs1769</name>
</gene>
<dbReference type="EC" id="3.5.2.7" evidence="1"/>
<dbReference type="EMBL" id="BA000034">
    <property type="protein sequence ID" value="BAC64864.1"/>
    <property type="status" value="ALT_INIT"/>
    <property type="molecule type" value="Genomic_DNA"/>
</dbReference>
<dbReference type="RefSeq" id="WP_011055071.1">
    <property type="nucleotide sequence ID" value="NC_004606.1"/>
</dbReference>
<dbReference type="SMR" id="P0DB77"/>
<dbReference type="KEGG" id="sps:SPs1769"/>
<dbReference type="HOGENOM" id="CLU_041647_0_1_9"/>
<dbReference type="UniPathway" id="UPA00379">
    <property type="reaction ID" value="UER00551"/>
</dbReference>
<dbReference type="GO" id="GO:0005737">
    <property type="term" value="C:cytoplasm"/>
    <property type="evidence" value="ECO:0007669"/>
    <property type="project" value="UniProtKB-SubCell"/>
</dbReference>
<dbReference type="GO" id="GO:0050480">
    <property type="term" value="F:imidazolonepropionase activity"/>
    <property type="evidence" value="ECO:0007669"/>
    <property type="project" value="UniProtKB-UniRule"/>
</dbReference>
<dbReference type="GO" id="GO:0005506">
    <property type="term" value="F:iron ion binding"/>
    <property type="evidence" value="ECO:0007669"/>
    <property type="project" value="UniProtKB-UniRule"/>
</dbReference>
<dbReference type="GO" id="GO:0008270">
    <property type="term" value="F:zinc ion binding"/>
    <property type="evidence" value="ECO:0007669"/>
    <property type="project" value="UniProtKB-UniRule"/>
</dbReference>
<dbReference type="GO" id="GO:0019556">
    <property type="term" value="P:L-histidine catabolic process to glutamate and formamide"/>
    <property type="evidence" value="ECO:0007669"/>
    <property type="project" value="UniProtKB-UniPathway"/>
</dbReference>
<dbReference type="GO" id="GO:0019557">
    <property type="term" value="P:L-histidine catabolic process to glutamate and formate"/>
    <property type="evidence" value="ECO:0007669"/>
    <property type="project" value="UniProtKB-UniPathway"/>
</dbReference>
<dbReference type="CDD" id="cd01296">
    <property type="entry name" value="Imidazolone-5PH"/>
    <property type="match status" value="1"/>
</dbReference>
<dbReference type="FunFam" id="3.20.20.140:FF:000007">
    <property type="entry name" value="Imidazolonepropionase"/>
    <property type="match status" value="1"/>
</dbReference>
<dbReference type="Gene3D" id="3.20.20.140">
    <property type="entry name" value="Metal-dependent hydrolases"/>
    <property type="match status" value="1"/>
</dbReference>
<dbReference type="Gene3D" id="2.30.40.10">
    <property type="entry name" value="Urease, subunit C, domain 1"/>
    <property type="match status" value="1"/>
</dbReference>
<dbReference type="HAMAP" id="MF_00372">
    <property type="entry name" value="HutI"/>
    <property type="match status" value="1"/>
</dbReference>
<dbReference type="InterPro" id="IPR006680">
    <property type="entry name" value="Amidohydro-rel"/>
</dbReference>
<dbReference type="InterPro" id="IPR005920">
    <property type="entry name" value="HutI"/>
</dbReference>
<dbReference type="InterPro" id="IPR011059">
    <property type="entry name" value="Metal-dep_hydrolase_composite"/>
</dbReference>
<dbReference type="InterPro" id="IPR032466">
    <property type="entry name" value="Metal_Hydrolase"/>
</dbReference>
<dbReference type="NCBIfam" id="TIGR01224">
    <property type="entry name" value="hutI"/>
    <property type="match status" value="1"/>
</dbReference>
<dbReference type="PANTHER" id="PTHR42752">
    <property type="entry name" value="IMIDAZOLONEPROPIONASE"/>
    <property type="match status" value="1"/>
</dbReference>
<dbReference type="PANTHER" id="PTHR42752:SF1">
    <property type="entry name" value="IMIDAZOLONEPROPIONASE-RELATED"/>
    <property type="match status" value="1"/>
</dbReference>
<dbReference type="Pfam" id="PF01979">
    <property type="entry name" value="Amidohydro_1"/>
    <property type="match status" value="1"/>
</dbReference>
<dbReference type="SUPFAM" id="SSF51338">
    <property type="entry name" value="Composite domain of metallo-dependent hydrolases"/>
    <property type="match status" value="1"/>
</dbReference>
<dbReference type="SUPFAM" id="SSF51556">
    <property type="entry name" value="Metallo-dependent hydrolases"/>
    <property type="match status" value="1"/>
</dbReference>
<comment type="function">
    <text evidence="1">Catalyzes the hydrolytic cleavage of the carbon-nitrogen bond in imidazolone-5-propanoate to yield N-formimidoyl-L-glutamate. It is the third step in the universal histidine degradation pathway.</text>
</comment>
<comment type="catalytic activity">
    <reaction evidence="1">
        <text>4-imidazolone-5-propanoate + H2O = N-formimidoyl-L-glutamate</text>
        <dbReference type="Rhea" id="RHEA:23660"/>
        <dbReference type="ChEBI" id="CHEBI:15377"/>
        <dbReference type="ChEBI" id="CHEBI:58928"/>
        <dbReference type="ChEBI" id="CHEBI:77893"/>
        <dbReference type="EC" id="3.5.2.7"/>
    </reaction>
</comment>
<comment type="cofactor">
    <cofactor evidence="1">
        <name>Zn(2+)</name>
        <dbReference type="ChEBI" id="CHEBI:29105"/>
    </cofactor>
    <cofactor evidence="1">
        <name>Fe(3+)</name>
        <dbReference type="ChEBI" id="CHEBI:29034"/>
    </cofactor>
    <text evidence="1">Binds 1 zinc or iron ion per subunit.</text>
</comment>
<comment type="pathway">
    <text evidence="1">Amino-acid degradation; L-histidine degradation into L-glutamate; N-formimidoyl-L-glutamate from L-histidine: step 3/3.</text>
</comment>
<comment type="subcellular location">
    <subcellularLocation>
        <location evidence="1">Cytoplasm</location>
    </subcellularLocation>
</comment>
<comment type="similarity">
    <text evidence="1">Belongs to the metallo-dependent hydrolases superfamily. HutI family.</text>
</comment>
<comment type="sequence caution" evidence="2">
    <conflict type="erroneous initiation">
        <sequence resource="EMBL-CDS" id="BAC64864"/>
    </conflict>
</comment>
<proteinExistence type="inferred from homology"/>
<accession>P0DB77</accession>
<accession>Q8K5M2</accession>
<sequence length="421" mass="45992">MVADVLLTHFNQLFCLNDPGHPLTGQEMKKATIVEDGYIAIKDGLIVALGSGEPDAELVGPQTIMRSYKGKIATPGIIDCHTHLVYGGSREHEFAKKLAGVSYLDILAQGGGILSTVRATRSASFDNLYQKSKRLLDYMLLHGVTTVEAKSGYGLDWETEKRQLDVVAALEKDHPIDLVSTFMAAHAIPEEYKGNPKAYLDVIIKDMLPVVKEENLAEFCDIFCEKNVFTADESRYLLSKAKEMGFKLRIHADEIASIGGVDVAAELSAVSAEHLMMITNDGIAKLIGAGVIGNLLPATTFSLMEDTYAPARKMIDAGMAITLSTDSNPGSCPTANMQFVMQLGCFMLRLTPIEVLNAVTINAAYSVNRQERVGSLTVGKEADIAIFDAPNIDYLFYFFATNLIHQVYKKGQLTVDRGRIL</sequence>
<keyword id="KW-0963">Cytoplasm</keyword>
<keyword id="KW-0369">Histidine metabolism</keyword>
<keyword id="KW-0378">Hydrolase</keyword>
<keyword id="KW-0408">Iron</keyword>
<keyword id="KW-0479">Metal-binding</keyword>
<keyword id="KW-0862">Zinc</keyword>
<organism>
    <name type="scientific">Streptococcus pyogenes serotype M3 (strain SSI-1)</name>
    <dbReference type="NCBI Taxonomy" id="193567"/>
    <lineage>
        <taxon>Bacteria</taxon>
        <taxon>Bacillati</taxon>
        <taxon>Bacillota</taxon>
        <taxon>Bacilli</taxon>
        <taxon>Lactobacillales</taxon>
        <taxon>Streptococcaceae</taxon>
        <taxon>Streptococcus</taxon>
    </lineage>
</organism>
<reference key="1">
    <citation type="journal article" date="2003" name="Genome Res.">
        <title>Genome sequence of an M3 strain of Streptococcus pyogenes reveals a large-scale genomic rearrangement in invasive strains and new insights into phage evolution.</title>
        <authorList>
            <person name="Nakagawa I."/>
            <person name="Kurokawa K."/>
            <person name="Yamashita A."/>
            <person name="Nakata M."/>
            <person name="Tomiyasu Y."/>
            <person name="Okahashi N."/>
            <person name="Kawabata S."/>
            <person name="Yamazaki K."/>
            <person name="Shiba T."/>
            <person name="Yasunaga T."/>
            <person name="Hayashi H."/>
            <person name="Hattori M."/>
            <person name="Hamada S."/>
        </authorList>
    </citation>
    <scope>NUCLEOTIDE SEQUENCE [LARGE SCALE GENOMIC DNA]</scope>
    <source>
        <strain>SSI-1</strain>
    </source>
</reference>
<name>HUTI_STRPQ</name>
<protein>
    <recommendedName>
        <fullName evidence="1">Imidazolonepropionase</fullName>
        <ecNumber evidence="1">3.5.2.7</ecNumber>
    </recommendedName>
    <alternativeName>
        <fullName evidence="1">Imidazolone-5-propionate hydrolase</fullName>
    </alternativeName>
</protein>
<feature type="chain" id="PRO_0000411376" description="Imidazolonepropionase">
    <location>
        <begin position="1"/>
        <end position="421"/>
    </location>
</feature>
<feature type="binding site" evidence="1">
    <location>
        <position position="81"/>
    </location>
    <ligand>
        <name>Fe(3+)</name>
        <dbReference type="ChEBI" id="CHEBI:29034"/>
    </ligand>
</feature>
<feature type="binding site" evidence="1">
    <location>
        <position position="81"/>
    </location>
    <ligand>
        <name>Zn(2+)</name>
        <dbReference type="ChEBI" id="CHEBI:29105"/>
    </ligand>
</feature>
<feature type="binding site" evidence="1">
    <location>
        <position position="83"/>
    </location>
    <ligand>
        <name>Fe(3+)</name>
        <dbReference type="ChEBI" id="CHEBI:29034"/>
    </ligand>
</feature>
<feature type="binding site" evidence="1">
    <location>
        <position position="83"/>
    </location>
    <ligand>
        <name>Zn(2+)</name>
        <dbReference type="ChEBI" id="CHEBI:29105"/>
    </ligand>
</feature>
<feature type="binding site" evidence="1">
    <location>
        <position position="90"/>
    </location>
    <ligand>
        <name>4-imidazolone-5-propanoate</name>
        <dbReference type="ChEBI" id="CHEBI:77893"/>
    </ligand>
</feature>
<feature type="binding site" evidence="1">
    <location>
        <position position="153"/>
    </location>
    <ligand>
        <name>4-imidazolone-5-propanoate</name>
        <dbReference type="ChEBI" id="CHEBI:77893"/>
    </ligand>
</feature>
<feature type="binding site" evidence="1">
    <location>
        <position position="153"/>
    </location>
    <ligand>
        <name>N-formimidoyl-L-glutamate</name>
        <dbReference type="ChEBI" id="CHEBI:58928"/>
    </ligand>
</feature>
<feature type="binding site" evidence="1">
    <location>
        <position position="186"/>
    </location>
    <ligand>
        <name>4-imidazolone-5-propanoate</name>
        <dbReference type="ChEBI" id="CHEBI:77893"/>
    </ligand>
</feature>
<feature type="binding site" evidence="1">
    <location>
        <position position="251"/>
    </location>
    <ligand>
        <name>Fe(3+)</name>
        <dbReference type="ChEBI" id="CHEBI:29034"/>
    </ligand>
</feature>
<feature type="binding site" evidence="1">
    <location>
        <position position="251"/>
    </location>
    <ligand>
        <name>Zn(2+)</name>
        <dbReference type="ChEBI" id="CHEBI:29105"/>
    </ligand>
</feature>
<feature type="binding site" evidence="1">
    <location>
        <position position="254"/>
    </location>
    <ligand>
        <name>4-imidazolone-5-propanoate</name>
        <dbReference type="ChEBI" id="CHEBI:77893"/>
    </ligand>
</feature>
<feature type="binding site" evidence="1">
    <location>
        <position position="326"/>
    </location>
    <ligand>
        <name>Fe(3+)</name>
        <dbReference type="ChEBI" id="CHEBI:29034"/>
    </ligand>
</feature>
<feature type="binding site" evidence="1">
    <location>
        <position position="326"/>
    </location>
    <ligand>
        <name>Zn(2+)</name>
        <dbReference type="ChEBI" id="CHEBI:29105"/>
    </ligand>
</feature>
<feature type="binding site" evidence="1">
    <location>
        <position position="328"/>
    </location>
    <ligand>
        <name>N-formimidoyl-L-glutamate</name>
        <dbReference type="ChEBI" id="CHEBI:58928"/>
    </ligand>
</feature>
<feature type="binding site" evidence="1">
    <location>
        <position position="330"/>
    </location>
    <ligand>
        <name>N-formimidoyl-L-glutamate</name>
        <dbReference type="ChEBI" id="CHEBI:58928"/>
    </ligand>
</feature>
<feature type="binding site" evidence="1">
    <location>
        <position position="331"/>
    </location>
    <ligand>
        <name>4-imidazolone-5-propanoate</name>
        <dbReference type="ChEBI" id="CHEBI:77893"/>
    </ligand>
</feature>
<evidence type="ECO:0000255" key="1">
    <source>
        <dbReference type="HAMAP-Rule" id="MF_00372"/>
    </source>
</evidence>
<evidence type="ECO:0000305" key="2"/>